<keyword id="KW-0031">Aminopeptidase</keyword>
<keyword id="KW-0963">Cytoplasm</keyword>
<keyword id="KW-0378">Hydrolase</keyword>
<keyword id="KW-0479">Metal-binding</keyword>
<keyword id="KW-0482">Metalloprotease</keyword>
<keyword id="KW-0645">Protease</keyword>
<keyword id="KW-0862">Zinc</keyword>
<proteinExistence type="inferred from homology"/>
<gene>
    <name evidence="1" type="primary">pepT</name>
    <name type="ordered locus">lwe1798</name>
</gene>
<comment type="function">
    <text evidence="1">Cleaves the N-terminal amino acid of tripeptides.</text>
</comment>
<comment type="catalytic activity">
    <reaction evidence="1">
        <text>Release of the N-terminal residue from a tripeptide.</text>
        <dbReference type="EC" id="3.4.11.4"/>
    </reaction>
</comment>
<comment type="cofactor">
    <cofactor evidence="1">
        <name>Zn(2+)</name>
        <dbReference type="ChEBI" id="CHEBI:29105"/>
    </cofactor>
    <text evidence="1">Binds 2 Zn(2+) ions per subunit.</text>
</comment>
<comment type="subcellular location">
    <subcellularLocation>
        <location evidence="1">Cytoplasm</location>
    </subcellularLocation>
</comment>
<comment type="similarity">
    <text evidence="1">Belongs to the peptidase M20B family.</text>
</comment>
<feature type="chain" id="PRO_1000017849" description="Peptidase T">
    <location>
        <begin position="1"/>
        <end position="410"/>
    </location>
</feature>
<feature type="active site" evidence="1">
    <location>
        <position position="81"/>
    </location>
</feature>
<feature type="active site" description="Proton acceptor" evidence="1">
    <location>
        <position position="176"/>
    </location>
</feature>
<feature type="binding site" evidence="1">
    <location>
        <position position="79"/>
    </location>
    <ligand>
        <name>Zn(2+)</name>
        <dbReference type="ChEBI" id="CHEBI:29105"/>
        <label>1</label>
    </ligand>
</feature>
<feature type="binding site" evidence="1">
    <location>
        <position position="142"/>
    </location>
    <ligand>
        <name>Zn(2+)</name>
        <dbReference type="ChEBI" id="CHEBI:29105"/>
        <label>1</label>
    </ligand>
</feature>
<feature type="binding site" evidence="1">
    <location>
        <position position="142"/>
    </location>
    <ligand>
        <name>Zn(2+)</name>
        <dbReference type="ChEBI" id="CHEBI:29105"/>
        <label>2</label>
    </ligand>
</feature>
<feature type="binding site" evidence="1">
    <location>
        <position position="177"/>
    </location>
    <ligand>
        <name>Zn(2+)</name>
        <dbReference type="ChEBI" id="CHEBI:29105"/>
        <label>2</label>
    </ligand>
</feature>
<feature type="binding site" evidence="1">
    <location>
        <position position="199"/>
    </location>
    <ligand>
        <name>Zn(2+)</name>
        <dbReference type="ChEBI" id="CHEBI:29105"/>
        <label>1</label>
    </ligand>
</feature>
<feature type="binding site" evidence="1">
    <location>
        <position position="381"/>
    </location>
    <ligand>
        <name>Zn(2+)</name>
        <dbReference type="ChEBI" id="CHEBI:29105"/>
        <label>2</label>
    </ligand>
</feature>
<reference key="1">
    <citation type="journal article" date="2006" name="J. Bacteriol.">
        <title>Whole-genome sequence of Listeria welshimeri reveals common steps in genome reduction with Listeria innocua as compared to Listeria monocytogenes.</title>
        <authorList>
            <person name="Hain T."/>
            <person name="Steinweg C."/>
            <person name="Kuenne C.T."/>
            <person name="Billion A."/>
            <person name="Ghai R."/>
            <person name="Chatterjee S.S."/>
            <person name="Domann E."/>
            <person name="Kaerst U."/>
            <person name="Goesmann A."/>
            <person name="Bekel T."/>
            <person name="Bartels D."/>
            <person name="Kaiser O."/>
            <person name="Meyer F."/>
            <person name="Puehler A."/>
            <person name="Weisshaar B."/>
            <person name="Wehland J."/>
            <person name="Liang C."/>
            <person name="Dandekar T."/>
            <person name="Lampidis R."/>
            <person name="Kreft J."/>
            <person name="Goebel W."/>
            <person name="Chakraborty T."/>
        </authorList>
    </citation>
    <scope>NUCLEOTIDE SEQUENCE [LARGE SCALE GENOMIC DNA]</scope>
    <source>
        <strain>ATCC 35897 / DSM 20650 / CCUG 15529 / CIP 8149 / NCTC 11857 / SLCC 5334 / V8</strain>
    </source>
</reference>
<protein>
    <recommendedName>
        <fullName evidence="1">Peptidase T</fullName>
        <ecNumber evidence="1">3.4.11.4</ecNumber>
    </recommendedName>
    <alternativeName>
        <fullName evidence="1">Aminotripeptidase</fullName>
        <shortName evidence="1">Tripeptidase</shortName>
    </alternativeName>
    <alternativeName>
        <fullName evidence="1">Tripeptide aminopeptidase</fullName>
    </alternativeName>
</protein>
<organism>
    <name type="scientific">Listeria welshimeri serovar 6b (strain ATCC 35897 / DSM 20650 / CCUG 15529 / CIP 8149 / NCTC 11857 / SLCC 5334 / V8)</name>
    <dbReference type="NCBI Taxonomy" id="386043"/>
    <lineage>
        <taxon>Bacteria</taxon>
        <taxon>Bacillati</taxon>
        <taxon>Bacillota</taxon>
        <taxon>Bacilli</taxon>
        <taxon>Bacillales</taxon>
        <taxon>Listeriaceae</taxon>
        <taxon>Listeria</taxon>
    </lineage>
</organism>
<name>PEPT_LISW6</name>
<sequence>MKEELLKRFTKYVKVDTQSNEESTVCPTTKGQMELANILVTELKEIGMQEVTVDEFGYVMATLPSNTTKEVPVIGFLAHLDTATDLTGKNVQPQVHENYDGKDIVLNKELNVVLSPKQFPELAQYKGKTLITTDGTTLLGADDKAGITEIMVAMNYLINHPEIKHGKIRIAFTPDEEIGRGPERFDVEAFGAKYAYTMDGGPLGELEYESFNAAAAKITFNGNSVHPGTAKNKMVNAVKMAMEFDARIPKEEAPEHTDGYEGFYHLISLNGDVEQAKSYYIIRDFDHLKFVERKTHIATVAKELEEKYGKGSVELKLNDQYYNMREKIEPVKEIVDIVSAAMRNLDIEPKISPIRGGTDGAQLSYKGLPTPNIFGGGENFHGKFEYVALESMVKATEVIIEVARLFEEKE</sequence>
<evidence type="ECO:0000255" key="1">
    <source>
        <dbReference type="HAMAP-Rule" id="MF_00550"/>
    </source>
</evidence>
<accession>A0AJN4</accession>
<dbReference type="EC" id="3.4.11.4" evidence="1"/>
<dbReference type="EMBL" id="AM263198">
    <property type="protein sequence ID" value="CAK21216.1"/>
    <property type="molecule type" value="Genomic_DNA"/>
</dbReference>
<dbReference type="RefSeq" id="WP_011702575.1">
    <property type="nucleotide sequence ID" value="NC_008555.1"/>
</dbReference>
<dbReference type="SMR" id="A0AJN4"/>
<dbReference type="STRING" id="386043.lwe1798"/>
<dbReference type="MEROPS" id="M20.003"/>
<dbReference type="GeneID" id="61189699"/>
<dbReference type="KEGG" id="lwe:lwe1798"/>
<dbReference type="eggNOG" id="COG2195">
    <property type="taxonomic scope" value="Bacteria"/>
</dbReference>
<dbReference type="HOGENOM" id="CLU_053676_0_0_9"/>
<dbReference type="OrthoDB" id="9804934at2"/>
<dbReference type="Proteomes" id="UP000000779">
    <property type="component" value="Chromosome"/>
</dbReference>
<dbReference type="GO" id="GO:0005829">
    <property type="term" value="C:cytosol"/>
    <property type="evidence" value="ECO:0007669"/>
    <property type="project" value="TreeGrafter"/>
</dbReference>
<dbReference type="GO" id="GO:0008237">
    <property type="term" value="F:metallopeptidase activity"/>
    <property type="evidence" value="ECO:0007669"/>
    <property type="project" value="UniProtKB-KW"/>
</dbReference>
<dbReference type="GO" id="GO:0045148">
    <property type="term" value="F:tripeptide aminopeptidase activity"/>
    <property type="evidence" value="ECO:0007669"/>
    <property type="project" value="UniProtKB-UniRule"/>
</dbReference>
<dbReference type="GO" id="GO:0008270">
    <property type="term" value="F:zinc ion binding"/>
    <property type="evidence" value="ECO:0007669"/>
    <property type="project" value="UniProtKB-UniRule"/>
</dbReference>
<dbReference type="GO" id="GO:0043171">
    <property type="term" value="P:peptide catabolic process"/>
    <property type="evidence" value="ECO:0007669"/>
    <property type="project" value="UniProtKB-UniRule"/>
</dbReference>
<dbReference type="GO" id="GO:0006508">
    <property type="term" value="P:proteolysis"/>
    <property type="evidence" value="ECO:0007669"/>
    <property type="project" value="UniProtKB-UniRule"/>
</dbReference>
<dbReference type="CDD" id="cd03892">
    <property type="entry name" value="M20_peptT"/>
    <property type="match status" value="1"/>
</dbReference>
<dbReference type="FunFam" id="3.30.70.360:FF:000002">
    <property type="entry name" value="Peptidase T"/>
    <property type="match status" value="1"/>
</dbReference>
<dbReference type="Gene3D" id="3.30.70.360">
    <property type="match status" value="1"/>
</dbReference>
<dbReference type="Gene3D" id="3.40.630.10">
    <property type="entry name" value="Zn peptidases"/>
    <property type="match status" value="1"/>
</dbReference>
<dbReference type="HAMAP" id="MF_00550">
    <property type="entry name" value="Aminopeptidase_M20"/>
    <property type="match status" value="1"/>
</dbReference>
<dbReference type="InterPro" id="IPR001261">
    <property type="entry name" value="ArgE/DapE_CS"/>
</dbReference>
<dbReference type="InterPro" id="IPR036264">
    <property type="entry name" value="Bact_exopeptidase_dim_dom"/>
</dbReference>
<dbReference type="InterPro" id="IPR002933">
    <property type="entry name" value="Peptidase_M20"/>
</dbReference>
<dbReference type="InterPro" id="IPR011650">
    <property type="entry name" value="Peptidase_M20_dimer"/>
</dbReference>
<dbReference type="InterPro" id="IPR010161">
    <property type="entry name" value="Peptidase_M20B"/>
</dbReference>
<dbReference type="NCBIfam" id="TIGR01882">
    <property type="entry name" value="peptidase-T"/>
    <property type="match status" value="1"/>
</dbReference>
<dbReference type="NCBIfam" id="NF003976">
    <property type="entry name" value="PRK05469.1"/>
    <property type="match status" value="1"/>
</dbReference>
<dbReference type="NCBIfam" id="NF009920">
    <property type="entry name" value="PRK13381.1"/>
    <property type="match status" value="1"/>
</dbReference>
<dbReference type="PANTHER" id="PTHR42994">
    <property type="entry name" value="PEPTIDASE T"/>
    <property type="match status" value="1"/>
</dbReference>
<dbReference type="PANTHER" id="PTHR42994:SF1">
    <property type="entry name" value="PEPTIDASE T"/>
    <property type="match status" value="1"/>
</dbReference>
<dbReference type="Pfam" id="PF07687">
    <property type="entry name" value="M20_dimer"/>
    <property type="match status" value="1"/>
</dbReference>
<dbReference type="Pfam" id="PF01546">
    <property type="entry name" value="Peptidase_M20"/>
    <property type="match status" value="1"/>
</dbReference>
<dbReference type="PIRSF" id="PIRSF037215">
    <property type="entry name" value="Peptidase_M20B"/>
    <property type="match status" value="1"/>
</dbReference>
<dbReference type="SUPFAM" id="SSF55031">
    <property type="entry name" value="Bacterial exopeptidase dimerisation domain"/>
    <property type="match status" value="1"/>
</dbReference>
<dbReference type="SUPFAM" id="SSF53187">
    <property type="entry name" value="Zn-dependent exopeptidases"/>
    <property type="match status" value="1"/>
</dbReference>
<dbReference type="PROSITE" id="PS00758">
    <property type="entry name" value="ARGE_DAPE_CPG2_1"/>
    <property type="match status" value="1"/>
</dbReference>
<dbReference type="PROSITE" id="PS00759">
    <property type="entry name" value="ARGE_DAPE_CPG2_2"/>
    <property type="match status" value="1"/>
</dbReference>